<organism>
    <name type="scientific">Burkholderia lata (strain ATCC 17760 / DSM 23089 / LMG 22485 / NCIMB 9086 / R18194 / 383)</name>
    <dbReference type="NCBI Taxonomy" id="482957"/>
    <lineage>
        <taxon>Bacteria</taxon>
        <taxon>Pseudomonadati</taxon>
        <taxon>Pseudomonadota</taxon>
        <taxon>Betaproteobacteria</taxon>
        <taxon>Burkholderiales</taxon>
        <taxon>Burkholderiaceae</taxon>
        <taxon>Burkholderia</taxon>
        <taxon>Burkholderia cepacia complex</taxon>
    </lineage>
</organism>
<keyword id="KW-0067">ATP-binding</keyword>
<keyword id="KW-0963">Cytoplasm</keyword>
<keyword id="KW-0227">DNA damage</keyword>
<keyword id="KW-0233">DNA recombination</keyword>
<keyword id="KW-0234">DNA repair</keyword>
<keyword id="KW-0238">DNA-binding</keyword>
<keyword id="KW-0378">Hydrolase</keyword>
<keyword id="KW-0547">Nucleotide-binding</keyword>
<proteinExistence type="inferred from homology"/>
<sequence length="356" mass="39421">MIETDKLATEQRIIAATPASSHEEVFERALRPRQLDDYVGQEKVRGQLEIFIEAAKRRSEPLDHVLLFGPPGLGKTTLAHIIAREMGVNLRQTSGPVLERAGDLAALLTNLEANDVLFIDEIHRLSPVVEEILYPALEDYQIDIMIGEGPAARSVKLDLQPFTLVGATTRAGMLTNPLRDRFGIVARLEFYDAEQLSRIVRRSASLLNAQIDPNGALEIAKRSRGTPRIANRLLRRVRDFAEVKADGQITAAVADAALAMLDVDPVGFDLMDRKLLEAILYKFDGGPVGIDNLAAAIGEERDTIEDVLEPYLIQQGFLQRTPRGRVATLLTYRHFGLSVPDTGRTERGEWDTPDGK</sequence>
<name>RUVB_BURL3</name>
<reference key="1">
    <citation type="submission" date="2005-10" db="EMBL/GenBank/DDBJ databases">
        <title>Complete sequence of chromosome 1 of Burkholderia sp. 383.</title>
        <authorList>
            <consortium name="US DOE Joint Genome Institute"/>
            <person name="Copeland A."/>
            <person name="Lucas S."/>
            <person name="Lapidus A."/>
            <person name="Barry K."/>
            <person name="Detter J.C."/>
            <person name="Glavina T."/>
            <person name="Hammon N."/>
            <person name="Israni S."/>
            <person name="Pitluck S."/>
            <person name="Chain P."/>
            <person name="Malfatti S."/>
            <person name="Shin M."/>
            <person name="Vergez L."/>
            <person name="Schmutz J."/>
            <person name="Larimer F."/>
            <person name="Land M."/>
            <person name="Kyrpides N."/>
            <person name="Lykidis A."/>
            <person name="Richardson P."/>
        </authorList>
    </citation>
    <scope>NUCLEOTIDE SEQUENCE [LARGE SCALE GENOMIC DNA]</scope>
    <source>
        <strain>ATCC 17760 / DSM 23089 / LMG 22485 / NCIMB 9086 / R18194 / 383</strain>
    </source>
</reference>
<dbReference type="EC" id="3.6.4.-" evidence="1"/>
<dbReference type="EMBL" id="CP000151">
    <property type="protein sequence ID" value="ABB07375.1"/>
    <property type="molecule type" value="Genomic_DNA"/>
</dbReference>
<dbReference type="RefSeq" id="WP_011350963.1">
    <property type="nucleotide sequence ID" value="NZ_WNDV01000019.1"/>
</dbReference>
<dbReference type="SMR" id="Q39JJ1"/>
<dbReference type="GeneID" id="93139389"/>
<dbReference type="KEGG" id="bur:Bcep18194_A3774"/>
<dbReference type="PATRIC" id="fig|482957.22.peg.635"/>
<dbReference type="HOGENOM" id="CLU_055599_1_0_4"/>
<dbReference type="Proteomes" id="UP000002705">
    <property type="component" value="Chromosome 1"/>
</dbReference>
<dbReference type="GO" id="GO:0005737">
    <property type="term" value="C:cytoplasm"/>
    <property type="evidence" value="ECO:0007669"/>
    <property type="project" value="UniProtKB-SubCell"/>
</dbReference>
<dbReference type="GO" id="GO:0048476">
    <property type="term" value="C:Holliday junction resolvase complex"/>
    <property type="evidence" value="ECO:0007669"/>
    <property type="project" value="UniProtKB-UniRule"/>
</dbReference>
<dbReference type="GO" id="GO:0005524">
    <property type="term" value="F:ATP binding"/>
    <property type="evidence" value="ECO:0007669"/>
    <property type="project" value="UniProtKB-UniRule"/>
</dbReference>
<dbReference type="GO" id="GO:0016887">
    <property type="term" value="F:ATP hydrolysis activity"/>
    <property type="evidence" value="ECO:0007669"/>
    <property type="project" value="InterPro"/>
</dbReference>
<dbReference type="GO" id="GO:0000400">
    <property type="term" value="F:four-way junction DNA binding"/>
    <property type="evidence" value="ECO:0007669"/>
    <property type="project" value="UniProtKB-UniRule"/>
</dbReference>
<dbReference type="GO" id="GO:0009378">
    <property type="term" value="F:four-way junction helicase activity"/>
    <property type="evidence" value="ECO:0007669"/>
    <property type="project" value="InterPro"/>
</dbReference>
<dbReference type="GO" id="GO:0006310">
    <property type="term" value="P:DNA recombination"/>
    <property type="evidence" value="ECO:0007669"/>
    <property type="project" value="UniProtKB-UniRule"/>
</dbReference>
<dbReference type="GO" id="GO:0006281">
    <property type="term" value="P:DNA repair"/>
    <property type="evidence" value="ECO:0007669"/>
    <property type="project" value="UniProtKB-UniRule"/>
</dbReference>
<dbReference type="CDD" id="cd00009">
    <property type="entry name" value="AAA"/>
    <property type="match status" value="1"/>
</dbReference>
<dbReference type="FunFam" id="1.10.10.10:FF:000086">
    <property type="entry name" value="Holliday junction ATP-dependent DNA helicase RuvB"/>
    <property type="match status" value="1"/>
</dbReference>
<dbReference type="FunFam" id="1.10.8.60:FF:000023">
    <property type="entry name" value="Holliday junction ATP-dependent DNA helicase RuvB"/>
    <property type="match status" value="1"/>
</dbReference>
<dbReference type="FunFam" id="3.40.50.300:FF:000073">
    <property type="entry name" value="Holliday junction ATP-dependent DNA helicase RuvB"/>
    <property type="match status" value="1"/>
</dbReference>
<dbReference type="Gene3D" id="1.10.8.60">
    <property type="match status" value="1"/>
</dbReference>
<dbReference type="Gene3D" id="3.40.50.300">
    <property type="entry name" value="P-loop containing nucleotide triphosphate hydrolases"/>
    <property type="match status" value="1"/>
</dbReference>
<dbReference type="Gene3D" id="1.10.10.10">
    <property type="entry name" value="Winged helix-like DNA-binding domain superfamily/Winged helix DNA-binding domain"/>
    <property type="match status" value="1"/>
</dbReference>
<dbReference type="HAMAP" id="MF_00016">
    <property type="entry name" value="DNA_HJ_migration_RuvB"/>
    <property type="match status" value="1"/>
</dbReference>
<dbReference type="InterPro" id="IPR003593">
    <property type="entry name" value="AAA+_ATPase"/>
</dbReference>
<dbReference type="InterPro" id="IPR041445">
    <property type="entry name" value="AAA_lid_4"/>
</dbReference>
<dbReference type="InterPro" id="IPR004605">
    <property type="entry name" value="DNA_helicase_Holl-junc_RuvB"/>
</dbReference>
<dbReference type="InterPro" id="IPR027417">
    <property type="entry name" value="P-loop_NTPase"/>
</dbReference>
<dbReference type="InterPro" id="IPR008824">
    <property type="entry name" value="RuvB-like_N"/>
</dbReference>
<dbReference type="InterPro" id="IPR008823">
    <property type="entry name" value="RuvB_C"/>
</dbReference>
<dbReference type="InterPro" id="IPR036388">
    <property type="entry name" value="WH-like_DNA-bd_sf"/>
</dbReference>
<dbReference type="InterPro" id="IPR036390">
    <property type="entry name" value="WH_DNA-bd_sf"/>
</dbReference>
<dbReference type="NCBIfam" id="NF000868">
    <property type="entry name" value="PRK00080.1"/>
    <property type="match status" value="1"/>
</dbReference>
<dbReference type="NCBIfam" id="TIGR00635">
    <property type="entry name" value="ruvB"/>
    <property type="match status" value="1"/>
</dbReference>
<dbReference type="PANTHER" id="PTHR42848">
    <property type="match status" value="1"/>
</dbReference>
<dbReference type="PANTHER" id="PTHR42848:SF1">
    <property type="entry name" value="HOLLIDAY JUNCTION BRANCH MIGRATION COMPLEX SUBUNIT RUVB"/>
    <property type="match status" value="1"/>
</dbReference>
<dbReference type="Pfam" id="PF17864">
    <property type="entry name" value="AAA_lid_4"/>
    <property type="match status" value="1"/>
</dbReference>
<dbReference type="Pfam" id="PF05491">
    <property type="entry name" value="RuvB_C"/>
    <property type="match status" value="1"/>
</dbReference>
<dbReference type="Pfam" id="PF05496">
    <property type="entry name" value="RuvB_N"/>
    <property type="match status" value="1"/>
</dbReference>
<dbReference type="SMART" id="SM00382">
    <property type="entry name" value="AAA"/>
    <property type="match status" value="1"/>
</dbReference>
<dbReference type="SUPFAM" id="SSF52540">
    <property type="entry name" value="P-loop containing nucleoside triphosphate hydrolases"/>
    <property type="match status" value="1"/>
</dbReference>
<dbReference type="SUPFAM" id="SSF46785">
    <property type="entry name" value="Winged helix' DNA-binding domain"/>
    <property type="match status" value="1"/>
</dbReference>
<comment type="function">
    <text evidence="1">The RuvA-RuvB-RuvC complex processes Holliday junction (HJ) DNA during genetic recombination and DNA repair, while the RuvA-RuvB complex plays an important role in the rescue of blocked DNA replication forks via replication fork reversal (RFR). RuvA specifically binds to HJ cruciform DNA, conferring on it an open structure. The RuvB hexamer acts as an ATP-dependent pump, pulling dsDNA into and through the RuvAB complex. RuvB forms 2 homohexamers on either side of HJ DNA bound by 1 or 2 RuvA tetramers; 4 subunits per hexamer contact DNA at a time. Coordinated motions by a converter formed by DNA-disengaged RuvB subunits stimulates ATP hydrolysis and nucleotide exchange. Immobilization of the converter enables RuvB to convert the ATP-contained energy into a lever motion, pulling 2 nucleotides of DNA out of the RuvA tetramer per ATP hydrolyzed, thus driving DNA branch migration. The RuvB motors rotate together with the DNA substrate, which together with the progressing nucleotide cycle form the mechanistic basis for DNA recombination by continuous HJ branch migration. Branch migration allows RuvC to scan DNA until it finds its consensus sequence, where it cleaves and resolves cruciform DNA.</text>
</comment>
<comment type="catalytic activity">
    <reaction evidence="1">
        <text>ATP + H2O = ADP + phosphate + H(+)</text>
        <dbReference type="Rhea" id="RHEA:13065"/>
        <dbReference type="ChEBI" id="CHEBI:15377"/>
        <dbReference type="ChEBI" id="CHEBI:15378"/>
        <dbReference type="ChEBI" id="CHEBI:30616"/>
        <dbReference type="ChEBI" id="CHEBI:43474"/>
        <dbReference type="ChEBI" id="CHEBI:456216"/>
    </reaction>
</comment>
<comment type="subunit">
    <text evidence="1">Homohexamer. Forms an RuvA(8)-RuvB(12)-Holliday junction (HJ) complex. HJ DNA is sandwiched between 2 RuvA tetramers; dsDNA enters through RuvA and exits via RuvB. An RuvB hexamer assembles on each DNA strand where it exits the tetramer. Each RuvB hexamer is contacted by two RuvA subunits (via domain III) on 2 adjacent RuvB subunits; this complex drives branch migration. In the full resolvosome a probable DNA-RuvA(4)-RuvB(12)-RuvC(2) complex forms which resolves the HJ.</text>
</comment>
<comment type="subcellular location">
    <subcellularLocation>
        <location evidence="1">Cytoplasm</location>
    </subcellularLocation>
</comment>
<comment type="domain">
    <text evidence="1">Has 3 domains, the large (RuvB-L) and small ATPase (RuvB-S) domains and the C-terminal head (RuvB-H) domain. The head domain binds DNA, while the ATPase domains jointly bind ATP, ADP or are empty depending on the state of the subunit in the translocation cycle. During a single DNA translocation step the structure of each domain remains the same, but their relative positions change.</text>
</comment>
<comment type="similarity">
    <text evidence="1">Belongs to the RuvB family.</text>
</comment>
<evidence type="ECO:0000255" key="1">
    <source>
        <dbReference type="HAMAP-Rule" id="MF_00016"/>
    </source>
</evidence>
<gene>
    <name evidence="1" type="primary">ruvB</name>
    <name type="ordered locus">Bcep18194_A3774</name>
</gene>
<feature type="chain" id="PRO_0000235354" description="Holliday junction branch migration complex subunit RuvB">
    <location>
        <begin position="1"/>
        <end position="356"/>
    </location>
</feature>
<feature type="region of interest" description="Large ATPase domain (RuvB-L)" evidence="1">
    <location>
        <begin position="4"/>
        <end position="191"/>
    </location>
</feature>
<feature type="region of interest" description="Small ATPAse domain (RuvB-S)" evidence="1">
    <location>
        <begin position="192"/>
        <end position="262"/>
    </location>
</feature>
<feature type="region of interest" description="Head domain (RuvB-H)" evidence="1">
    <location>
        <begin position="265"/>
        <end position="356"/>
    </location>
</feature>
<feature type="binding site" evidence="1">
    <location>
        <position position="30"/>
    </location>
    <ligand>
        <name>ATP</name>
        <dbReference type="ChEBI" id="CHEBI:30616"/>
    </ligand>
</feature>
<feature type="binding site" evidence="1">
    <location>
        <position position="31"/>
    </location>
    <ligand>
        <name>ATP</name>
        <dbReference type="ChEBI" id="CHEBI:30616"/>
    </ligand>
</feature>
<feature type="binding site" evidence="1">
    <location>
        <position position="72"/>
    </location>
    <ligand>
        <name>ATP</name>
        <dbReference type="ChEBI" id="CHEBI:30616"/>
    </ligand>
</feature>
<feature type="binding site" evidence="1">
    <location>
        <position position="75"/>
    </location>
    <ligand>
        <name>ATP</name>
        <dbReference type="ChEBI" id="CHEBI:30616"/>
    </ligand>
</feature>
<feature type="binding site" evidence="1">
    <location>
        <position position="76"/>
    </location>
    <ligand>
        <name>ATP</name>
        <dbReference type="ChEBI" id="CHEBI:30616"/>
    </ligand>
</feature>
<feature type="binding site" evidence="1">
    <location>
        <position position="76"/>
    </location>
    <ligand>
        <name>Mg(2+)</name>
        <dbReference type="ChEBI" id="CHEBI:18420"/>
    </ligand>
</feature>
<feature type="binding site" evidence="1">
    <location>
        <position position="77"/>
    </location>
    <ligand>
        <name>ATP</name>
        <dbReference type="ChEBI" id="CHEBI:30616"/>
    </ligand>
</feature>
<feature type="binding site" evidence="1">
    <location>
        <begin position="138"/>
        <end position="140"/>
    </location>
    <ligand>
        <name>ATP</name>
        <dbReference type="ChEBI" id="CHEBI:30616"/>
    </ligand>
</feature>
<feature type="binding site" evidence="1">
    <location>
        <position position="181"/>
    </location>
    <ligand>
        <name>ATP</name>
        <dbReference type="ChEBI" id="CHEBI:30616"/>
    </ligand>
</feature>
<feature type="binding site" evidence="1">
    <location>
        <position position="191"/>
    </location>
    <ligand>
        <name>ATP</name>
        <dbReference type="ChEBI" id="CHEBI:30616"/>
    </ligand>
</feature>
<feature type="binding site" evidence="1">
    <location>
        <position position="228"/>
    </location>
    <ligand>
        <name>ATP</name>
        <dbReference type="ChEBI" id="CHEBI:30616"/>
    </ligand>
</feature>
<feature type="binding site" evidence="1">
    <location>
        <position position="301"/>
    </location>
    <ligand>
        <name>DNA</name>
        <dbReference type="ChEBI" id="CHEBI:16991"/>
    </ligand>
</feature>
<feature type="binding site" evidence="1">
    <location>
        <position position="320"/>
    </location>
    <ligand>
        <name>DNA</name>
        <dbReference type="ChEBI" id="CHEBI:16991"/>
    </ligand>
</feature>
<feature type="binding site" evidence="1">
    <location>
        <position position="325"/>
    </location>
    <ligand>
        <name>DNA</name>
        <dbReference type="ChEBI" id="CHEBI:16991"/>
    </ligand>
</feature>
<protein>
    <recommendedName>
        <fullName evidence="1">Holliday junction branch migration complex subunit RuvB</fullName>
        <ecNumber evidence="1">3.6.4.-</ecNumber>
    </recommendedName>
</protein>
<accession>Q39JJ1</accession>